<reference key="1">
    <citation type="journal article" date="1974" name="Biochem. J.">
        <title>The isolation and amino acid sequence of an adrenocorticotrophin from the pars distalis and a corticotrophin-like intermediate-lobe peptide from the neurointermediate lobe of the pituitary of the dogfish Squalus acanthias.</title>
        <authorList>
            <person name="Lowry P.J."/>
            <person name="Bennett H.P.J."/>
            <person name="McMartin C."/>
            <person name="Scott A.P."/>
        </authorList>
    </citation>
    <scope>PROTEIN SEQUENCE</scope>
</reference>
<reference key="2">
    <citation type="journal article" date="1970" name="Biochem. J.">
        <title>Purification and amino acid sequence of melanocyte-stimulating hormone from the dogfish Squalus acanthias.</title>
        <authorList>
            <person name="Lowry P.J."/>
            <person name="Chadwick A."/>
        </authorList>
    </citation>
    <scope>PROTEIN SEQUENCE OF 3-13</scope>
</reference>
<reference key="3">
    <citation type="journal article" date="1974" name="Biochem. J.">
        <title>Structural studies of alpha-melanocyte-stimulating hormone and a novel beta-melanocyte-stimulating hormone from the neurointermediate lobe of the pituitary of the dogfish Squalus acanthias.</title>
        <authorList>
            <person name="Bennett H.P.J."/>
            <person name="Lowry P.J."/>
            <person name="McMartin C."/>
            <person name="Scott A.P."/>
        </authorList>
    </citation>
    <scope>SEQUENCE REVISION</scope>
    <scope>AMIDATION AT MET-13</scope>
</reference>
<accession>P01197</accession>
<dbReference type="PIR" id="A90276">
    <property type="entry name" value="CTDFAS"/>
</dbReference>
<dbReference type="GO" id="GO:0005576">
    <property type="term" value="C:extracellular region"/>
    <property type="evidence" value="ECO:0007669"/>
    <property type="project" value="UniProtKB-SubCell"/>
</dbReference>
<dbReference type="GO" id="GO:0005184">
    <property type="term" value="F:neuropeptide hormone activity"/>
    <property type="evidence" value="ECO:0007669"/>
    <property type="project" value="TreeGrafter"/>
</dbReference>
<dbReference type="GO" id="GO:0007218">
    <property type="term" value="P:neuropeptide signaling pathway"/>
    <property type="evidence" value="ECO:0007669"/>
    <property type="project" value="TreeGrafter"/>
</dbReference>
<dbReference type="InterPro" id="IPR013531">
    <property type="entry name" value="Mcrtin_ACTH_cent"/>
</dbReference>
<dbReference type="InterPro" id="IPR001941">
    <property type="entry name" value="PMOC"/>
</dbReference>
<dbReference type="InterPro" id="IPR050878">
    <property type="entry name" value="POMC-derived_peptides"/>
</dbReference>
<dbReference type="PANTHER" id="PTHR11416">
    <property type="entry name" value="PRO-OPIOMELANOCORTIN"/>
    <property type="match status" value="1"/>
</dbReference>
<dbReference type="PANTHER" id="PTHR11416:SF7">
    <property type="entry name" value="PRO-OPIOMELANOCORTIN"/>
    <property type="match status" value="1"/>
</dbReference>
<dbReference type="Pfam" id="PF00976">
    <property type="entry name" value="ACTH_domain"/>
    <property type="match status" value="1"/>
</dbReference>
<dbReference type="PRINTS" id="PR00383">
    <property type="entry name" value="MELANOCORTIN"/>
</dbReference>
<dbReference type="SMART" id="SM01363">
    <property type="entry name" value="ACTH_domain"/>
    <property type="match status" value="1"/>
</dbReference>
<name>COLI_SQUAC</name>
<protein>
    <recommendedName>
        <fullName>Pro-opiomelanocortin</fullName>
        <shortName>POMC</shortName>
    </recommendedName>
    <alternativeName>
        <fullName>Corticotropin-lipotropin</fullName>
    </alternativeName>
    <component>
        <recommendedName>
            <fullName>Corticotropin</fullName>
        </recommendedName>
        <alternativeName>
            <fullName>Adrenocorticotropic hormone</fullName>
            <shortName>ACTH</shortName>
        </alternativeName>
    </component>
    <component>
        <recommendedName>
            <fullName>Melanocyte-stimulating hormone alpha</fullName>
            <shortName>Alpha-MSH</shortName>
        </recommendedName>
        <alternativeName>
            <fullName>Melanotropin alpha</fullName>
        </alternativeName>
    </component>
    <component>
        <recommendedName>
            <fullName>Corticotropin-like intermediary peptide</fullName>
            <shortName>CLIP</shortName>
        </recommendedName>
    </component>
</protein>
<gene>
    <name type="primary">pomc</name>
</gene>
<organism>
    <name type="scientific">Squalus acanthias</name>
    <name type="common">Spiny dogfish</name>
    <dbReference type="NCBI Taxonomy" id="7797"/>
    <lineage>
        <taxon>Eukaryota</taxon>
        <taxon>Metazoa</taxon>
        <taxon>Chordata</taxon>
        <taxon>Craniata</taxon>
        <taxon>Vertebrata</taxon>
        <taxon>Chondrichthyes</taxon>
        <taxon>Elasmobranchii</taxon>
        <taxon>Squalomorphii</taxon>
        <taxon>Squaliformes</taxon>
        <taxon>Squalidae</taxon>
        <taxon>Squalus</taxon>
    </lineage>
</organism>
<proteinExistence type="evidence at protein level"/>
<sequence length="39" mass="4686">SYSMEHFRWGKPMGRKRRPIKVYPNSFEDESVENMGPEL</sequence>
<keyword id="KW-0027">Amidation</keyword>
<keyword id="KW-0165">Cleavage on pair of basic residues</keyword>
<keyword id="KW-0903">Direct protein sequencing</keyword>
<keyword id="KW-0372">Hormone</keyword>
<keyword id="KW-0964">Secreted</keyword>
<feature type="peptide" id="PRO_0000025144" description="Corticotropin">
    <location>
        <begin position="1"/>
        <end position="39"/>
    </location>
</feature>
<feature type="peptide" id="PRO_0000025145" description="Melanocyte-stimulating hormone alpha" evidence="2">
    <location>
        <begin position="1"/>
        <end position="13"/>
    </location>
</feature>
<feature type="peptide" id="PRO_0000025146" description="Corticotropin-like intermediary peptide">
    <location>
        <begin position="19"/>
        <end position="39"/>
    </location>
</feature>
<feature type="modified residue" description="Methionine amide" evidence="3">
    <location>
        <position position="13"/>
    </location>
</feature>
<feature type="non-terminal residue">
    <location>
        <position position="1"/>
    </location>
</feature>
<feature type="non-terminal residue">
    <location>
        <position position="39"/>
    </location>
</feature>
<evidence type="ECO:0000250" key="1">
    <source>
        <dbReference type="UniProtKB" id="P01193"/>
    </source>
</evidence>
<evidence type="ECO:0000269" key="2">
    <source>
    </source>
</evidence>
<evidence type="ECO:0000269" key="3">
    <source>
    </source>
</evidence>
<evidence type="ECO:0000305" key="4"/>
<comment type="function">
    <text>Precursor protein for pituitary hormones that regulate stress and environmental adaptation.</text>
</comment>
<comment type="function">
    <molecule>Corticotropin</molecule>
    <text>Stimulates the adrenal glands to release cortisol.</text>
</comment>
<comment type="function">
    <molecule>Melanocyte-stimulating hormone alpha</molecule>
    <text>Anorexigenic peptide. Increases the pigmentation of skin by increasing melanin production in melanocytes.</text>
</comment>
<comment type="subcellular location">
    <subcellularLocation>
        <location evidence="1">Secreted</location>
    </subcellularLocation>
    <text evidence="1">Alpha-MSH and beta-endorphin are stored in separate granules in hypothalamic POMC neurons, suggesting that secretion may be under the control of different regulatory mechanisms.</text>
</comment>
<comment type="similarity">
    <text evidence="4">Belongs to the POMC family.</text>
</comment>